<comment type="function">
    <text evidence="4">Forms a complex with CCMFN1, CCMFN2 and CCMH that performs the assembly of heme with c-type apocytochromes in mitochondria.</text>
</comment>
<comment type="subunit">
    <text evidence="4">Interacts with CCMFN2.</text>
</comment>
<comment type="interaction">
    <interactant intactId="EBI-1797481">
        <id>P93286</id>
    </interactant>
    <interactant intactId="EBI-763400">
        <id>Q33884</id>
        <label>CCMFN2</label>
    </interactant>
    <organismsDiffer>false</organismsDiffer>
    <experiments>4</experiments>
</comment>
<comment type="subcellular location">
    <subcellularLocation>
        <location evidence="4">Mitochondrion inner membrane</location>
        <topology evidence="1">Multi-pass membrane protein</topology>
    </subcellularLocation>
</comment>
<comment type="RNA editing">
    <location>
        <position position="17" evidence="3 5"/>
    </location>
    <location>
        <position position="35" evidence="3 5"/>
    </location>
    <location>
        <position position="41" evidence="3 5"/>
    </location>
    <location>
        <position position="49" evidence="3 5"/>
    </location>
    <location>
        <position position="52" evidence="3 5"/>
    </location>
    <location>
        <position position="54" evidence="3 5"/>
    </location>
    <location>
        <position position="112" evidence="3 5"/>
    </location>
    <location>
        <position position="136" evidence="3 5"/>
    </location>
    <location>
        <position position="139" evidence="3 5"/>
    </location>
    <location>
        <position position="309" evidence="3"/>
    </location>
    <location>
        <position position="391" evidence="3 5"/>
    </location>
    <location>
        <position position="416" evidence="3 5"/>
    </location>
    <location>
        <position position="427" evidence="3 5"/>
    </location>
    <location>
        <position position="443" evidence="3 5"/>
    </location>
    <text>The stop codon at position 443 is created by RNA editing.</text>
</comment>
<comment type="miscellaneous">
    <text>A stretch of 270 kb of the mitochondrial genome is duplicated within the centromere of chromosome 2 resulting in the duplication of the gene. The expression of the duplicated gene (At2g07723) is not demonstrated. It is also probably not RNA edited and therefore differs in all the positions known to be edited.</text>
</comment>
<comment type="similarity">
    <text evidence="6">Belongs to the CcmF/CycK/Ccl1/NrfE/CcsA family.</text>
</comment>
<accession>P93286</accession>
<accession>A0A2P2CLG0</accession>
<keyword id="KW-0201">Cytochrome c-type biogenesis</keyword>
<keyword id="KW-0472">Membrane</keyword>
<keyword id="KW-0496">Mitochondrion</keyword>
<keyword id="KW-0999">Mitochondrion inner membrane</keyword>
<keyword id="KW-1185">Reference proteome</keyword>
<keyword id="KW-0691">RNA editing</keyword>
<keyword id="KW-0812">Transmembrane</keyword>
<keyword id="KW-1133">Transmembrane helix</keyword>
<keyword id="KW-0813">Transport</keyword>
<proteinExistence type="evidence at protein level"/>
<feature type="chain" id="PRO_0000201593" description="Cytochrome c biogenesis CcmF C-terminal-like mitochondrial protein">
    <location>
        <begin position="1"/>
        <end position="442"/>
    </location>
</feature>
<feature type="transmembrane region" description="Helical" evidence="1">
    <location>
        <begin position="6"/>
        <end position="26"/>
    </location>
</feature>
<feature type="transmembrane region" description="Helical" evidence="1">
    <location>
        <begin position="39"/>
        <end position="59"/>
    </location>
</feature>
<feature type="transmembrane region" description="Helical" evidence="1">
    <location>
        <begin position="122"/>
        <end position="142"/>
    </location>
</feature>
<feature type="transmembrane region" description="Helical" evidence="1">
    <location>
        <begin position="411"/>
        <end position="431"/>
    </location>
</feature>
<feature type="region of interest" description="Disordered" evidence="2">
    <location>
        <begin position="151"/>
        <end position="175"/>
    </location>
</feature>
<feature type="compositionally biased region" description="Basic and acidic residues" evidence="2">
    <location>
        <begin position="166"/>
        <end position="175"/>
    </location>
</feature>
<name>CCMFC_ARATH</name>
<protein>
    <recommendedName>
        <fullName evidence="6">Cytochrome c biogenesis CcmF C-terminal-like mitochondrial protein</fullName>
    </recommendedName>
    <alternativeName>
        <fullName evidence="7">Cytochrome c biogenesis orf452</fullName>
    </alternativeName>
</protein>
<gene>
    <name type="primary">CCMFC</name>
    <name evidence="7" type="synonym">CCB452</name>
    <name type="synonym">CCB6C</name>
    <name type="ordered locus">AtMg00180</name>
</gene>
<organism>
    <name type="scientific">Arabidopsis thaliana</name>
    <name type="common">Mouse-ear cress</name>
    <dbReference type="NCBI Taxonomy" id="3702"/>
    <lineage>
        <taxon>Eukaryota</taxon>
        <taxon>Viridiplantae</taxon>
        <taxon>Streptophyta</taxon>
        <taxon>Embryophyta</taxon>
        <taxon>Tracheophyta</taxon>
        <taxon>Spermatophyta</taxon>
        <taxon>Magnoliopsida</taxon>
        <taxon>eudicotyledons</taxon>
        <taxon>Gunneridae</taxon>
        <taxon>Pentapetalae</taxon>
        <taxon>rosids</taxon>
        <taxon>malvids</taxon>
        <taxon>Brassicales</taxon>
        <taxon>Brassicaceae</taxon>
        <taxon>Camelineae</taxon>
        <taxon>Arabidopsis</taxon>
    </lineage>
</organism>
<reference key="1">
    <citation type="journal article" date="1997" name="Nat. Genet.">
        <title>The mitochondrial genome of Arabidopsis thaliana contains 57 genes in 366,924 nucleotides.</title>
        <authorList>
            <person name="Unseld M."/>
            <person name="Marienfeld J.R."/>
            <person name="Brandt P."/>
            <person name="Brennicke A."/>
        </authorList>
    </citation>
    <scope>NUCLEOTIDE SEQUENCE [LARGE SCALE GENOMIC DNA]</scope>
    <source>
        <strain>cv. C24</strain>
    </source>
</reference>
<reference key="2">
    <citation type="journal article" date="1999" name="Proc. Natl. Acad. Sci. U.S.A.">
        <title>RNA editing in Arabidopsis mitochondria effects 441 C to U changes in ORFs.</title>
        <authorList>
            <person name="Giege P."/>
            <person name="Brennicke A."/>
        </authorList>
    </citation>
    <scope>NUCLEOTIDE SEQUENCE [GENOMIC DNA]</scope>
    <scope>RNA EDITING</scope>
</reference>
<reference key="3">
    <citation type="journal article" date="2018" name="Plant Cell">
        <title>Correction of persistent errors in Arabidopsis reference mitochondrial genomes.</title>
        <authorList>
            <person name="Sloan D.B."/>
            <person name="Wu Z."/>
            <person name="Sharbrough J."/>
        </authorList>
    </citation>
    <scope>NUCLEOTIDE SEQUENCE [LARGE SCALE GENOMIC DNA]</scope>
    <scope>RNA EDITING</scope>
    <source>
        <strain>cv. Columbia</strain>
    </source>
</reference>
<reference key="4">
    <citation type="journal article" date="1999" name="Nature">
        <title>Sequence and analysis of chromosome 2 of the plant Arabidopsis thaliana.</title>
        <authorList>
            <person name="Lin X."/>
            <person name="Kaul S."/>
            <person name="Rounsley S.D."/>
            <person name="Shea T.P."/>
            <person name="Benito M.-I."/>
            <person name="Town C.D."/>
            <person name="Fujii C.Y."/>
            <person name="Mason T.M."/>
            <person name="Bowman C.L."/>
            <person name="Barnstead M.E."/>
            <person name="Feldblyum T.V."/>
            <person name="Buell C.R."/>
            <person name="Ketchum K.A."/>
            <person name="Lee J.J."/>
            <person name="Ronning C.M."/>
            <person name="Koo H.L."/>
            <person name="Moffat K.S."/>
            <person name="Cronin L.A."/>
            <person name="Shen M."/>
            <person name="Pai G."/>
            <person name="Van Aken S."/>
            <person name="Umayam L."/>
            <person name="Tallon L.J."/>
            <person name="Gill J.E."/>
            <person name="Adams M.D."/>
            <person name="Carrera A.J."/>
            <person name="Creasy T.H."/>
            <person name="Goodman H.M."/>
            <person name="Somerville C.R."/>
            <person name="Copenhaver G.P."/>
            <person name="Preuss D."/>
            <person name="Nierman W.C."/>
            <person name="White O."/>
            <person name="Eisen J.A."/>
            <person name="Salzberg S.L."/>
            <person name="Fraser C.M."/>
            <person name="Venter J.C."/>
        </authorList>
    </citation>
    <scope>NUCLEOTIDE SEQUENCE [LARGE SCALE GENOMIC DNA] (AT2G07723)</scope>
    <source>
        <strain>cv. Columbia</strain>
    </source>
</reference>
<reference key="5">
    <citation type="journal article" date="2008" name="J. Biol. Chem.">
        <title>The three mitochondrial encoded CcmF proteins form a complex that interacts with CCMH and c-type apocytochromes in Arabidopsis.</title>
        <authorList>
            <person name="Rayapuram N."/>
            <person name="Hagenmuller J."/>
            <person name="Grienenberger J.M."/>
            <person name="Bonnard G."/>
            <person name="Giege P."/>
        </authorList>
    </citation>
    <scope>FUNCTION</scope>
    <scope>INTERACTION WITH CCMFN2</scope>
    <scope>SUBCELLULAR LOCATION</scope>
</reference>
<dbReference type="EMBL" id="Y08501">
    <property type="protein sequence ID" value="CAA69763.3"/>
    <property type="status" value="ALT_SEQ"/>
    <property type="molecule type" value="Genomic_DNA"/>
</dbReference>
<dbReference type="EMBL" id="BK010421">
    <property type="protein sequence ID" value="DAB41508.2"/>
    <property type="molecule type" value="Genomic_DNA"/>
</dbReference>
<dbReference type="EMBL" id="AC006225">
    <property type="status" value="NOT_ANNOTATED_CDS"/>
    <property type="molecule type" value="Genomic_DNA"/>
</dbReference>
<dbReference type="RefSeq" id="NP_085489.1">
    <property type="nucleotide sequence ID" value="NC_001284.2"/>
</dbReference>
<dbReference type="FunCoup" id="P93286">
    <property type="interactions" value="2"/>
</dbReference>
<dbReference type="IntAct" id="P93286">
    <property type="interactions" value="2"/>
</dbReference>
<dbReference type="STRING" id="3702.A0A2P2CLG0"/>
<dbReference type="TCDB" id="9.B.14.1.6">
    <property type="family name" value="the putative heme handling protein (hhp) family"/>
</dbReference>
<dbReference type="SwissPalm" id="P93286"/>
<dbReference type="PaxDb" id="3702-ATMG00180.1"/>
<dbReference type="PeptideAtlas" id="P93286"/>
<dbReference type="Araport" id="ATMG00180"/>
<dbReference type="TAIR" id="ATMG00180">
    <property type="gene designation" value="CCB452"/>
</dbReference>
<dbReference type="eggNOG" id="KOG0017">
    <property type="taxonomic scope" value="Eukaryota"/>
</dbReference>
<dbReference type="InParanoid" id="P93286"/>
<dbReference type="PRO" id="PR:P93286"/>
<dbReference type="Proteomes" id="UP000006548">
    <property type="component" value="Mitochondrion MT"/>
</dbReference>
<dbReference type="ExpressionAtlas" id="P93286">
    <property type="expression patterns" value="baseline and differential"/>
</dbReference>
<dbReference type="GO" id="GO:0005743">
    <property type="term" value="C:mitochondrial inner membrane"/>
    <property type="evidence" value="ECO:0000314"/>
    <property type="project" value="UniProtKB"/>
</dbReference>
<dbReference type="GO" id="GO:0017004">
    <property type="term" value="P:cytochrome complex assembly"/>
    <property type="evidence" value="ECO:0007669"/>
    <property type="project" value="UniProtKB-KW"/>
</dbReference>
<dbReference type="InterPro" id="IPR032523">
    <property type="entry name" value="CcmF_C"/>
</dbReference>
<dbReference type="InterPro" id="IPR044955">
    <property type="entry name" value="CCMFC"/>
</dbReference>
<dbReference type="PANTHER" id="PTHR36010">
    <property type="entry name" value="CYTOCHROME C BIOGENESIS CCMF C-TERMINAL-LIKE MITOCHONDRIAL PROTEIN-RELATED"/>
    <property type="match status" value="1"/>
</dbReference>
<dbReference type="PANTHER" id="PTHR36010:SF1">
    <property type="entry name" value="CYTOCHROME C BIOGENESIS CCMF C-TERMINAL-LIKE MITOCHONDRIAL PROTEIN-RELATED"/>
    <property type="match status" value="1"/>
</dbReference>
<dbReference type="Pfam" id="PF16327">
    <property type="entry name" value="CcmF_C"/>
    <property type="match status" value="2"/>
</dbReference>
<geneLocation type="mitochondrion"/>
<sequence>MVQLHNFFFFIIFMVVLCGTAAPVLLKWFVSRDVSTGAPFFNGTIIPILISLFSLLVYLHSRKIIRSMDGAKSGVLVRASRPILLPDIIGRSSSETRARKALFFFVPVLHFCLLESKGDFSYLESFCGVLCLLFFCTFFFLARDRSAKRERARRRKGQTLRPNGNEQRRNDKMRCSGHPHLDLERRVEGFGPLAFPVPPELGGACVGGVPPEIGLEALALPRSRQLMAMAVGHDYYQKVPMKMNISHGGVCICMLGVLLSNTKKIQFTQRLPLGYELHMGKERCCLRGLDHLHGPTFHSICGNLMIYKPSLTNDRLMFEHDESLHADLLLINFPASYKNGKLEHFLHWWMKNRKHNNFWLTMFPEKRYFRERTSTAEVAIHTNLFTDLYALIGTGSSRTGGWYTTIMKLPFIFFIWIGFMLASLGGLPSLLRQLQKDKLRWN</sequence>
<evidence type="ECO:0000255" key="1"/>
<evidence type="ECO:0000256" key="2">
    <source>
        <dbReference type="SAM" id="MobiDB-lite"/>
    </source>
</evidence>
<evidence type="ECO:0000269" key="3">
    <source>
    </source>
</evidence>
<evidence type="ECO:0000269" key="4">
    <source>
    </source>
</evidence>
<evidence type="ECO:0000269" key="5">
    <source>
    </source>
</evidence>
<evidence type="ECO:0000305" key="6"/>
<evidence type="ECO:0000312" key="7">
    <source>
        <dbReference type="EMBL" id="CAA69763.3"/>
    </source>
</evidence>